<feature type="chain" id="PRO_1000005906" description="DNA-directed RNA polymerase subunit omega">
    <location>
        <begin position="1"/>
        <end position="74"/>
    </location>
</feature>
<dbReference type="EC" id="2.7.7.6" evidence="1"/>
<dbReference type="EMBL" id="CP000768">
    <property type="protein sequence ID" value="ABS43602.1"/>
    <property type="molecule type" value="Genomic_DNA"/>
</dbReference>
<dbReference type="SMR" id="A7H2A7"/>
<dbReference type="KEGG" id="cjd:JJD26997_0452"/>
<dbReference type="HOGENOM" id="CLU_125406_3_0_7"/>
<dbReference type="Proteomes" id="UP000002302">
    <property type="component" value="Chromosome"/>
</dbReference>
<dbReference type="GO" id="GO:0000428">
    <property type="term" value="C:DNA-directed RNA polymerase complex"/>
    <property type="evidence" value="ECO:0007669"/>
    <property type="project" value="UniProtKB-KW"/>
</dbReference>
<dbReference type="GO" id="GO:0003677">
    <property type="term" value="F:DNA binding"/>
    <property type="evidence" value="ECO:0007669"/>
    <property type="project" value="UniProtKB-UniRule"/>
</dbReference>
<dbReference type="GO" id="GO:0003899">
    <property type="term" value="F:DNA-directed RNA polymerase activity"/>
    <property type="evidence" value="ECO:0007669"/>
    <property type="project" value="UniProtKB-UniRule"/>
</dbReference>
<dbReference type="GO" id="GO:0006351">
    <property type="term" value="P:DNA-templated transcription"/>
    <property type="evidence" value="ECO:0007669"/>
    <property type="project" value="UniProtKB-UniRule"/>
</dbReference>
<dbReference type="Gene3D" id="3.90.940.10">
    <property type="match status" value="1"/>
</dbReference>
<dbReference type="HAMAP" id="MF_00366">
    <property type="entry name" value="RNApol_bact_RpoZ"/>
    <property type="match status" value="1"/>
</dbReference>
<dbReference type="InterPro" id="IPR003716">
    <property type="entry name" value="DNA-dir_RNA_pol_omega"/>
</dbReference>
<dbReference type="InterPro" id="IPR006110">
    <property type="entry name" value="Pol_omega/Rpo6/RPB6"/>
</dbReference>
<dbReference type="InterPro" id="IPR036161">
    <property type="entry name" value="RPB6/omega-like_sf"/>
</dbReference>
<dbReference type="NCBIfam" id="NF001579">
    <property type="entry name" value="PRK00392.6-2"/>
    <property type="match status" value="1"/>
</dbReference>
<dbReference type="NCBIfam" id="TIGR00690">
    <property type="entry name" value="rpoZ"/>
    <property type="match status" value="1"/>
</dbReference>
<dbReference type="Pfam" id="PF01192">
    <property type="entry name" value="RNA_pol_Rpb6"/>
    <property type="match status" value="1"/>
</dbReference>
<dbReference type="SMART" id="SM01409">
    <property type="entry name" value="RNA_pol_Rpb6"/>
    <property type="match status" value="1"/>
</dbReference>
<dbReference type="SUPFAM" id="SSF63562">
    <property type="entry name" value="RPB6/omega subunit-like"/>
    <property type="match status" value="1"/>
</dbReference>
<name>RPOZ_CAMJD</name>
<protein>
    <recommendedName>
        <fullName evidence="1">DNA-directed RNA polymerase subunit omega</fullName>
        <shortName evidence="1">RNAP omega subunit</shortName>
        <ecNumber evidence="1">2.7.7.6</ecNumber>
    </recommendedName>
    <alternativeName>
        <fullName evidence="1">RNA polymerase omega subunit</fullName>
    </alternativeName>
    <alternativeName>
        <fullName evidence="1">Transcriptase subunit omega</fullName>
    </alternativeName>
</protein>
<keyword id="KW-0240">DNA-directed RNA polymerase</keyword>
<keyword id="KW-0548">Nucleotidyltransferase</keyword>
<keyword id="KW-0804">Transcription</keyword>
<keyword id="KW-0808">Transferase</keyword>
<reference key="1">
    <citation type="submission" date="2007-07" db="EMBL/GenBank/DDBJ databases">
        <title>Complete genome sequence of Campylobacter jejuni subsp doylei 269.97 isolated from human blood.</title>
        <authorList>
            <person name="Fouts D.E."/>
            <person name="Mongodin E.F."/>
            <person name="Puiu D."/>
            <person name="Sebastian Y."/>
            <person name="Miller W.G."/>
            <person name="Mandrell R.E."/>
            <person name="Lastovica A.J."/>
            <person name="Nelson K.E."/>
        </authorList>
    </citation>
    <scope>NUCLEOTIDE SEQUENCE [LARGE SCALE GENOMIC DNA]</scope>
    <source>
        <strain>ATCC BAA-1458 / RM4099 / 269.97</strain>
    </source>
</reference>
<sequence length="74" mass="8318">MDKRIEEVAAKALEKMGNDRYRLSLVVAKRAEQLANGATPLVDFDKNKNKLADIALYEIAENKITLEGLVETNR</sequence>
<accession>A7H2A7</accession>
<evidence type="ECO:0000255" key="1">
    <source>
        <dbReference type="HAMAP-Rule" id="MF_00366"/>
    </source>
</evidence>
<organism>
    <name type="scientific">Campylobacter jejuni subsp. doylei (strain ATCC BAA-1458 / RM4099 / 269.97)</name>
    <dbReference type="NCBI Taxonomy" id="360109"/>
    <lineage>
        <taxon>Bacteria</taxon>
        <taxon>Pseudomonadati</taxon>
        <taxon>Campylobacterota</taxon>
        <taxon>Epsilonproteobacteria</taxon>
        <taxon>Campylobacterales</taxon>
        <taxon>Campylobacteraceae</taxon>
        <taxon>Campylobacter</taxon>
    </lineage>
</organism>
<proteinExistence type="inferred from homology"/>
<gene>
    <name evidence="1" type="primary">rpoZ</name>
    <name type="ordered locus">JJD26997_0452</name>
</gene>
<comment type="function">
    <text evidence="1">Promotes RNA polymerase assembly. Latches the N- and C-terminal regions of the beta' subunit thereby facilitating its interaction with the beta and alpha subunits.</text>
</comment>
<comment type="catalytic activity">
    <reaction evidence="1">
        <text>RNA(n) + a ribonucleoside 5'-triphosphate = RNA(n+1) + diphosphate</text>
        <dbReference type="Rhea" id="RHEA:21248"/>
        <dbReference type="Rhea" id="RHEA-COMP:14527"/>
        <dbReference type="Rhea" id="RHEA-COMP:17342"/>
        <dbReference type="ChEBI" id="CHEBI:33019"/>
        <dbReference type="ChEBI" id="CHEBI:61557"/>
        <dbReference type="ChEBI" id="CHEBI:140395"/>
        <dbReference type="EC" id="2.7.7.6"/>
    </reaction>
</comment>
<comment type="subunit">
    <text evidence="1">The RNAP catalytic core consists of 2 alpha, 1 beta, 1 beta' and 1 omega subunit. When a sigma factor is associated with the core the holoenzyme is formed, which can initiate transcription.</text>
</comment>
<comment type="similarity">
    <text evidence="1">Belongs to the RNA polymerase subunit omega family.</text>
</comment>